<accession>Q03234</accession>
<sequence>MPNSTGKIAQVIGPVVDVAFPINDNLPEINNALTITRKDGSQLVLEVALELGDGVMRTIAMDSTDGLQRGMAVEDTGGPISVPVGKDTLGRVFNVLGDPIDDGEALDLNHRRDSIHRDAPKFEDLNTSSEILETGIKVIDLLEPYLRGGKVGLFGGAGVGKTVLIQELIHNIAEEHGGISVFTGVGERTREGNDLYFEMKESGVMENTAMVFGQMNEPPGARMRVALTGLTIAEYFRDVEGQDVLLFIDNIFRFTQAGSEVSALLGRIPSAVGYQPTLATEMGQLQERITSTKKGSVTSIQAIYVPADDYTDPAPRTTFAHLDATTNLERRLTEQGIYPAVDPLESSSSALTPEIVGEEHYKVATEVQQVLQRYRELQDIISILGMDELSDEEKVIVARARRVQFFLSQNFNVAERFTGQPGSYVPVEETVKGFKQILEGKYDDYPEDAFRSVGRIEEVVEKAKKMGFAP</sequence>
<comment type="function">
    <text evidence="1">Produces ATP from ADP in the presence of a proton gradient across the membrane. The catalytic sites are hosted primarily by the beta subunits.</text>
</comment>
<comment type="catalytic activity">
    <reaction evidence="1">
        <text>ATP + H2O + 4 H(+)(in) = ADP + phosphate + 5 H(+)(out)</text>
        <dbReference type="Rhea" id="RHEA:57720"/>
        <dbReference type="ChEBI" id="CHEBI:15377"/>
        <dbReference type="ChEBI" id="CHEBI:15378"/>
        <dbReference type="ChEBI" id="CHEBI:30616"/>
        <dbReference type="ChEBI" id="CHEBI:43474"/>
        <dbReference type="ChEBI" id="CHEBI:456216"/>
        <dbReference type="EC" id="7.1.2.2"/>
    </reaction>
</comment>
<comment type="subunit">
    <text evidence="1">F-type ATPases have 2 components, CF(1) - the catalytic core - and CF(0) - the membrane proton channel. CF(1) has five subunits: alpha(3), beta(3), gamma(1), delta(1), epsilon(1). CF(0) has three main subunits: a(1), b(2) and c(9-12). The alpha and beta chains form an alternating ring which encloses part of the gamma chain. CF(1) is attached to CF(0) by a central stalk formed by the gamma and epsilon chains, while a peripheral stalk is formed by the delta and b chains.</text>
</comment>
<comment type="subcellular location">
    <subcellularLocation>
        <location evidence="1">Cell membrane</location>
        <topology evidence="1">Peripheral membrane protein</topology>
    </subcellularLocation>
</comment>
<comment type="similarity">
    <text evidence="1">Belongs to the ATPase alpha/beta chains family.</text>
</comment>
<proteinExistence type="inferred from homology"/>
<protein>
    <recommendedName>
        <fullName evidence="1">ATP synthase subunit beta</fullName>
        <ecNumber evidence="1">7.1.2.2</ecNumber>
    </recommendedName>
    <alternativeName>
        <fullName evidence="1">ATP synthase F1 sector subunit beta</fullName>
    </alternativeName>
    <alternativeName>
        <fullName evidence="1">F-ATPase subunit beta</fullName>
    </alternativeName>
</protein>
<feature type="chain" id="PRO_0000144447" description="ATP synthase subunit beta">
    <location>
        <begin position="1"/>
        <end position="470"/>
    </location>
</feature>
<feature type="binding site" evidence="1">
    <location>
        <begin position="155"/>
        <end position="162"/>
    </location>
    <ligand>
        <name>ATP</name>
        <dbReference type="ChEBI" id="CHEBI:30616"/>
    </ligand>
</feature>
<keyword id="KW-0066">ATP synthesis</keyword>
<keyword id="KW-0067">ATP-binding</keyword>
<keyword id="KW-1003">Cell membrane</keyword>
<keyword id="KW-0139">CF(1)</keyword>
<keyword id="KW-0375">Hydrogen ion transport</keyword>
<keyword id="KW-0406">Ion transport</keyword>
<keyword id="KW-0472">Membrane</keyword>
<keyword id="KW-0547">Nucleotide-binding</keyword>
<keyword id="KW-1278">Translocase</keyword>
<keyword id="KW-0813">Transport</keyword>
<reference key="1">
    <citation type="journal article" date="1992" name="Syst. Appl. Microbiol.">
        <title>Subunit beta of adenosine triphosphate synthase of Pectinatus frisingensis and Lactobacillus casei.</title>
        <authorList>
            <person name="Klugbauer N."/>
            <person name="Ludwig W."/>
            <person name="Bauerlein E."/>
            <person name="Schleifer K.H."/>
        </authorList>
    </citation>
    <scope>NUCLEOTIDE SEQUENCE [GENOMIC DNA]</scope>
</reference>
<dbReference type="EC" id="7.1.2.2" evidence="1"/>
<dbReference type="EMBL" id="X64542">
    <property type="protein sequence ID" value="CAA45840.1"/>
    <property type="molecule type" value="Genomic_DNA"/>
</dbReference>
<dbReference type="PIR" id="S30597">
    <property type="entry name" value="S30597"/>
</dbReference>
<dbReference type="SMR" id="Q03234"/>
<dbReference type="STRING" id="1582.AAW28_03515"/>
<dbReference type="eggNOG" id="COG0055">
    <property type="taxonomic scope" value="Bacteria"/>
</dbReference>
<dbReference type="GO" id="GO:0005886">
    <property type="term" value="C:plasma membrane"/>
    <property type="evidence" value="ECO:0007669"/>
    <property type="project" value="UniProtKB-SubCell"/>
</dbReference>
<dbReference type="GO" id="GO:0045259">
    <property type="term" value="C:proton-transporting ATP synthase complex"/>
    <property type="evidence" value="ECO:0007669"/>
    <property type="project" value="UniProtKB-KW"/>
</dbReference>
<dbReference type="GO" id="GO:0005524">
    <property type="term" value="F:ATP binding"/>
    <property type="evidence" value="ECO:0007669"/>
    <property type="project" value="UniProtKB-UniRule"/>
</dbReference>
<dbReference type="GO" id="GO:0016887">
    <property type="term" value="F:ATP hydrolysis activity"/>
    <property type="evidence" value="ECO:0007669"/>
    <property type="project" value="InterPro"/>
</dbReference>
<dbReference type="GO" id="GO:0046933">
    <property type="term" value="F:proton-transporting ATP synthase activity, rotational mechanism"/>
    <property type="evidence" value="ECO:0007669"/>
    <property type="project" value="UniProtKB-UniRule"/>
</dbReference>
<dbReference type="CDD" id="cd18110">
    <property type="entry name" value="ATP-synt_F1_beta_C"/>
    <property type="match status" value="1"/>
</dbReference>
<dbReference type="CDD" id="cd18115">
    <property type="entry name" value="ATP-synt_F1_beta_N"/>
    <property type="match status" value="1"/>
</dbReference>
<dbReference type="CDD" id="cd01133">
    <property type="entry name" value="F1-ATPase_beta_CD"/>
    <property type="match status" value="1"/>
</dbReference>
<dbReference type="FunFam" id="1.10.1140.10:FF:000001">
    <property type="entry name" value="ATP synthase subunit beta"/>
    <property type="match status" value="1"/>
</dbReference>
<dbReference type="FunFam" id="2.40.10.170:FF:000005">
    <property type="entry name" value="ATP synthase subunit beta"/>
    <property type="match status" value="1"/>
</dbReference>
<dbReference type="FunFam" id="3.40.50.300:FF:000004">
    <property type="entry name" value="ATP synthase subunit beta"/>
    <property type="match status" value="1"/>
</dbReference>
<dbReference type="Gene3D" id="2.40.10.170">
    <property type="match status" value="1"/>
</dbReference>
<dbReference type="Gene3D" id="1.10.1140.10">
    <property type="entry name" value="Bovine Mitochondrial F1-atpase, Atp Synthase Beta Chain, Chain D, domain 3"/>
    <property type="match status" value="1"/>
</dbReference>
<dbReference type="Gene3D" id="3.40.50.300">
    <property type="entry name" value="P-loop containing nucleotide triphosphate hydrolases"/>
    <property type="match status" value="1"/>
</dbReference>
<dbReference type="HAMAP" id="MF_01347">
    <property type="entry name" value="ATP_synth_beta_bact"/>
    <property type="match status" value="1"/>
</dbReference>
<dbReference type="InterPro" id="IPR003593">
    <property type="entry name" value="AAA+_ATPase"/>
</dbReference>
<dbReference type="InterPro" id="IPR055190">
    <property type="entry name" value="ATP-synt_VA_C"/>
</dbReference>
<dbReference type="InterPro" id="IPR005722">
    <property type="entry name" value="ATP_synth_F1_bsu"/>
</dbReference>
<dbReference type="InterPro" id="IPR020003">
    <property type="entry name" value="ATPase_a/bsu_AS"/>
</dbReference>
<dbReference type="InterPro" id="IPR050053">
    <property type="entry name" value="ATPase_alpha/beta_chains"/>
</dbReference>
<dbReference type="InterPro" id="IPR004100">
    <property type="entry name" value="ATPase_F1/V1/A1_a/bsu_N"/>
</dbReference>
<dbReference type="InterPro" id="IPR036121">
    <property type="entry name" value="ATPase_F1/V1/A1_a/bsu_N_sf"/>
</dbReference>
<dbReference type="InterPro" id="IPR000194">
    <property type="entry name" value="ATPase_F1/V1/A1_a/bsu_nucl-bd"/>
</dbReference>
<dbReference type="InterPro" id="IPR024034">
    <property type="entry name" value="ATPase_F1/V1_b/a_C"/>
</dbReference>
<dbReference type="InterPro" id="IPR027417">
    <property type="entry name" value="P-loop_NTPase"/>
</dbReference>
<dbReference type="NCBIfam" id="TIGR01039">
    <property type="entry name" value="atpD"/>
    <property type="match status" value="1"/>
</dbReference>
<dbReference type="PANTHER" id="PTHR15184">
    <property type="entry name" value="ATP SYNTHASE"/>
    <property type="match status" value="1"/>
</dbReference>
<dbReference type="PANTHER" id="PTHR15184:SF71">
    <property type="entry name" value="ATP SYNTHASE SUBUNIT BETA, MITOCHONDRIAL"/>
    <property type="match status" value="1"/>
</dbReference>
<dbReference type="Pfam" id="PF00006">
    <property type="entry name" value="ATP-synt_ab"/>
    <property type="match status" value="1"/>
</dbReference>
<dbReference type="Pfam" id="PF02874">
    <property type="entry name" value="ATP-synt_ab_N"/>
    <property type="match status" value="1"/>
</dbReference>
<dbReference type="Pfam" id="PF22919">
    <property type="entry name" value="ATP-synt_VA_C"/>
    <property type="match status" value="1"/>
</dbReference>
<dbReference type="SMART" id="SM00382">
    <property type="entry name" value="AAA"/>
    <property type="match status" value="1"/>
</dbReference>
<dbReference type="SUPFAM" id="SSF47917">
    <property type="entry name" value="C-terminal domain of alpha and beta subunits of F1 ATP synthase"/>
    <property type="match status" value="1"/>
</dbReference>
<dbReference type="SUPFAM" id="SSF50615">
    <property type="entry name" value="N-terminal domain of alpha and beta subunits of F1 ATP synthase"/>
    <property type="match status" value="1"/>
</dbReference>
<dbReference type="SUPFAM" id="SSF52540">
    <property type="entry name" value="P-loop containing nucleoside triphosphate hydrolases"/>
    <property type="match status" value="1"/>
</dbReference>
<dbReference type="PROSITE" id="PS00152">
    <property type="entry name" value="ATPASE_ALPHA_BETA"/>
    <property type="match status" value="1"/>
</dbReference>
<name>ATPB_LACCA</name>
<gene>
    <name evidence="1" type="primary">atpD</name>
</gene>
<evidence type="ECO:0000255" key="1">
    <source>
        <dbReference type="HAMAP-Rule" id="MF_01347"/>
    </source>
</evidence>
<organism>
    <name type="scientific">Lacticaseibacillus casei</name>
    <name type="common">Lactobacillus casei</name>
    <dbReference type="NCBI Taxonomy" id="1582"/>
    <lineage>
        <taxon>Bacteria</taxon>
        <taxon>Bacillati</taxon>
        <taxon>Bacillota</taxon>
        <taxon>Bacilli</taxon>
        <taxon>Lactobacillales</taxon>
        <taxon>Lactobacillaceae</taxon>
        <taxon>Lacticaseibacillus</taxon>
    </lineage>
</organism>